<organism>
    <name type="scientific">Nostoc sp. (strain PCC 7120 / SAG 25.82 / UTEX 2576)</name>
    <dbReference type="NCBI Taxonomy" id="103690"/>
    <lineage>
        <taxon>Bacteria</taxon>
        <taxon>Bacillati</taxon>
        <taxon>Cyanobacteriota</taxon>
        <taxon>Cyanophyceae</taxon>
        <taxon>Nostocales</taxon>
        <taxon>Nostocaceae</taxon>
        <taxon>Nostoc</taxon>
    </lineage>
</organism>
<sequence>MPNSTSQVTKLKSKNNEFSYTADAVSIYLHKIGRVPLLSHEQEIFFAQQVQQMMVMFTAKEELAEKLQREPTLQEWADKMQLKEDVLLQQLSQGQIAKQKMIQANLRLVVSIAKKYQKRNLEFLDLIQEGALGLERGVEKFDPTLGYKFSTYAYWWIRQGITRAIAQQSRTIRLPIHMADKLNKIKCVQRELSQKLGYIAGVTEIAQALNLEPSQIREYLQLVRQPVSLDMRIGFEQDTQLQDLLKDDGMSPERYAERELLYQDIHNLLAKLTPQQKEVLILRFGLAGGCELTLVQISQRMGISRERVRQVEKQALTLLRRYGIDSRSYLAD</sequence>
<reference key="1">
    <citation type="journal article" date="1992" name="J. Bacteriol.">
        <title>Identification of multiple RNA polymerase sigma factor homologs in the cyanobacterium Anabaena sp. strain PCC 7120: cloning, expression, and inactivation of the sigB and sigC genes.</title>
        <authorList>
            <person name="Brahamsha B."/>
            <person name="Haselkorn R."/>
        </authorList>
    </citation>
    <scope>NUCLEOTIDE SEQUENCE [GENOMIC DNA]</scope>
</reference>
<reference key="2">
    <citation type="journal article" date="2001" name="DNA Res.">
        <title>Complete genomic sequence of the filamentous nitrogen-fixing cyanobacterium Anabaena sp. strain PCC 7120.</title>
        <authorList>
            <person name="Kaneko T."/>
            <person name="Nakamura Y."/>
            <person name="Wolk C.P."/>
            <person name="Kuritz T."/>
            <person name="Sasamoto S."/>
            <person name="Watanabe A."/>
            <person name="Iriguchi M."/>
            <person name="Ishikawa A."/>
            <person name="Kawashima K."/>
            <person name="Kimura T."/>
            <person name="Kishida Y."/>
            <person name="Kohara M."/>
            <person name="Matsumoto M."/>
            <person name="Matsuno A."/>
            <person name="Muraki A."/>
            <person name="Nakazaki N."/>
            <person name="Shimpo S."/>
            <person name="Sugimoto M."/>
            <person name="Takazawa M."/>
            <person name="Yamada M."/>
            <person name="Yasuda M."/>
            <person name="Tabata S."/>
        </authorList>
    </citation>
    <scope>NUCLEOTIDE SEQUENCE [LARGE SCALE GENOMIC DNA]</scope>
    <source>
        <strain>PCC 7120 / SAG 25.82 / UTEX 2576</strain>
    </source>
</reference>
<gene>
    <name type="primary">sigB</name>
    <name type="ordered locus">all7615</name>
</gene>
<feature type="chain" id="PRO_0000093935" description="RNA polymerase sigma-B factor">
    <location>
        <begin position="1"/>
        <end position="332"/>
    </location>
</feature>
<feature type="DNA-binding region" description="H-T-H motif" evidence="1">
    <location>
        <begin position="294"/>
        <end position="313"/>
    </location>
</feature>
<feature type="short sequence motif" description="Polymerase core binding">
    <location>
        <begin position="125"/>
        <end position="138"/>
    </location>
</feature>
<proteinExistence type="inferred from homology"/>
<comment type="function">
    <text>Sigma factors are initiation factors that promote the attachment of RNA polymerase to specific initiation sites and are then released.</text>
</comment>
<comment type="similarity">
    <text evidence="2">Belongs to the sigma-70 factor family.</text>
</comment>
<keyword id="KW-0238">DNA-binding</keyword>
<keyword id="KW-0614">Plasmid</keyword>
<keyword id="KW-1185">Reference proteome</keyword>
<keyword id="KW-0731">Sigma factor</keyword>
<keyword id="KW-0804">Transcription</keyword>
<keyword id="KW-0805">Transcription regulation</keyword>
<evidence type="ECO:0000250" key="1"/>
<evidence type="ECO:0000305" key="2"/>
<dbReference type="EMBL" id="M95760">
    <property type="protein sequence ID" value="AAA22046.1"/>
    <property type="molecule type" value="Genomic_DNA"/>
</dbReference>
<dbReference type="EMBL" id="AP003602">
    <property type="protein sequence ID" value="BAB77258.1"/>
    <property type="molecule type" value="Genomic_DNA"/>
</dbReference>
<dbReference type="PIR" id="AD2541">
    <property type="entry name" value="AD2541"/>
</dbReference>
<dbReference type="RefSeq" id="WP_010993943.1">
    <property type="nucleotide sequence ID" value="NZ_RSCN01000012.1"/>
</dbReference>
<dbReference type="SMR" id="Q03065"/>
<dbReference type="KEGG" id="ana:all7615"/>
<dbReference type="OrthoDB" id="1185556at2"/>
<dbReference type="Proteomes" id="UP000002483">
    <property type="component" value="Plasmid pCC7120beta"/>
</dbReference>
<dbReference type="GO" id="GO:0003677">
    <property type="term" value="F:DNA binding"/>
    <property type="evidence" value="ECO:0007669"/>
    <property type="project" value="UniProtKB-KW"/>
</dbReference>
<dbReference type="GO" id="GO:0016987">
    <property type="term" value="F:sigma factor activity"/>
    <property type="evidence" value="ECO:0007669"/>
    <property type="project" value="UniProtKB-KW"/>
</dbReference>
<dbReference type="GO" id="GO:0006352">
    <property type="term" value="P:DNA-templated transcription initiation"/>
    <property type="evidence" value="ECO:0007669"/>
    <property type="project" value="InterPro"/>
</dbReference>
<dbReference type="CDD" id="cd06171">
    <property type="entry name" value="Sigma70_r4"/>
    <property type="match status" value="1"/>
</dbReference>
<dbReference type="FunFam" id="1.10.601.10:FF:000001">
    <property type="entry name" value="RNA polymerase sigma factor SigA"/>
    <property type="match status" value="1"/>
</dbReference>
<dbReference type="Gene3D" id="1.20.120.1810">
    <property type="match status" value="1"/>
</dbReference>
<dbReference type="Gene3D" id="1.10.10.10">
    <property type="entry name" value="Winged helix-like DNA-binding domain superfamily/Winged helix DNA-binding domain"/>
    <property type="match status" value="2"/>
</dbReference>
<dbReference type="InterPro" id="IPR014284">
    <property type="entry name" value="RNA_pol_sigma-70_dom"/>
</dbReference>
<dbReference type="InterPro" id="IPR000943">
    <property type="entry name" value="RNA_pol_sigma70"/>
</dbReference>
<dbReference type="InterPro" id="IPR009042">
    <property type="entry name" value="RNA_pol_sigma70_r1_2"/>
</dbReference>
<dbReference type="InterPro" id="IPR007627">
    <property type="entry name" value="RNA_pol_sigma70_r2"/>
</dbReference>
<dbReference type="InterPro" id="IPR007624">
    <property type="entry name" value="RNA_pol_sigma70_r3"/>
</dbReference>
<dbReference type="InterPro" id="IPR007630">
    <property type="entry name" value="RNA_pol_sigma70_r4"/>
</dbReference>
<dbReference type="InterPro" id="IPR013325">
    <property type="entry name" value="RNA_pol_sigma_r2"/>
</dbReference>
<dbReference type="InterPro" id="IPR013324">
    <property type="entry name" value="RNA_pol_sigma_r3/r4-like"/>
</dbReference>
<dbReference type="InterPro" id="IPR017848">
    <property type="entry name" value="RNA_pol_sigma_RpoD/SigA_cyanob"/>
</dbReference>
<dbReference type="InterPro" id="IPR050239">
    <property type="entry name" value="Sigma-70_RNA_pol_init_factors"/>
</dbReference>
<dbReference type="InterPro" id="IPR036388">
    <property type="entry name" value="WH-like_DNA-bd_sf"/>
</dbReference>
<dbReference type="NCBIfam" id="TIGR02997">
    <property type="entry name" value="Sig70-cyanoRpoD"/>
    <property type="match status" value="1"/>
</dbReference>
<dbReference type="NCBIfam" id="TIGR02937">
    <property type="entry name" value="sigma70-ECF"/>
    <property type="match status" value="1"/>
</dbReference>
<dbReference type="PANTHER" id="PTHR30603">
    <property type="entry name" value="RNA POLYMERASE SIGMA FACTOR RPO"/>
    <property type="match status" value="1"/>
</dbReference>
<dbReference type="PANTHER" id="PTHR30603:SF60">
    <property type="entry name" value="RNA POLYMERASE SIGMA FACTOR RPOD"/>
    <property type="match status" value="1"/>
</dbReference>
<dbReference type="Pfam" id="PF00140">
    <property type="entry name" value="Sigma70_r1_2"/>
    <property type="match status" value="1"/>
</dbReference>
<dbReference type="Pfam" id="PF04542">
    <property type="entry name" value="Sigma70_r2"/>
    <property type="match status" value="1"/>
</dbReference>
<dbReference type="Pfam" id="PF04539">
    <property type="entry name" value="Sigma70_r3"/>
    <property type="match status" value="1"/>
</dbReference>
<dbReference type="Pfam" id="PF04545">
    <property type="entry name" value="Sigma70_r4"/>
    <property type="match status" value="1"/>
</dbReference>
<dbReference type="PRINTS" id="PR00046">
    <property type="entry name" value="SIGMA70FCT"/>
</dbReference>
<dbReference type="SUPFAM" id="SSF88946">
    <property type="entry name" value="Sigma2 domain of RNA polymerase sigma factors"/>
    <property type="match status" value="1"/>
</dbReference>
<dbReference type="SUPFAM" id="SSF88659">
    <property type="entry name" value="Sigma3 and sigma4 domains of RNA polymerase sigma factors"/>
    <property type="match status" value="2"/>
</dbReference>
<dbReference type="PROSITE" id="PS00715">
    <property type="entry name" value="SIGMA70_1"/>
    <property type="match status" value="1"/>
</dbReference>
<dbReference type="PROSITE" id="PS00716">
    <property type="entry name" value="SIGMA70_2"/>
    <property type="match status" value="1"/>
</dbReference>
<name>RPSB_NOSS1</name>
<geneLocation type="plasmid">
    <name>pCC7120alpha</name>
</geneLocation>
<accession>Q03065</accession>
<protein>
    <recommendedName>
        <fullName>RNA polymerase sigma-B factor</fullName>
    </recommendedName>
</protein>